<name>YDIQ_ECOLI</name>
<keyword id="KW-0249">Electron transport</keyword>
<keyword id="KW-0274">FAD</keyword>
<keyword id="KW-0285">Flavoprotein</keyword>
<keyword id="KW-1185">Reference proteome</keyword>
<keyword id="KW-0813">Transport</keyword>
<proteinExistence type="inferred from homology"/>
<feature type="chain" id="PRO_0000167899" description="Putative electron transfer flavoprotein subunit YdiQ">
    <location>
        <begin position="1"/>
        <end position="254"/>
    </location>
</feature>
<protein>
    <recommendedName>
        <fullName>Putative electron transfer flavoprotein subunit YdiQ</fullName>
    </recommendedName>
</protein>
<dbReference type="EMBL" id="U00096">
    <property type="protein sequence ID" value="AAC74767.1"/>
    <property type="molecule type" value="Genomic_DNA"/>
</dbReference>
<dbReference type="EMBL" id="AP009048">
    <property type="protein sequence ID" value="BAA15466.2"/>
    <property type="molecule type" value="Genomic_DNA"/>
</dbReference>
<dbReference type="PIR" id="A64928">
    <property type="entry name" value="A64928"/>
</dbReference>
<dbReference type="RefSeq" id="NP_416212.1">
    <property type="nucleotide sequence ID" value="NC_000913.3"/>
</dbReference>
<dbReference type="RefSeq" id="WP_000692135.1">
    <property type="nucleotide sequence ID" value="NZ_SSZK01000001.1"/>
</dbReference>
<dbReference type="SMR" id="P76201"/>
<dbReference type="BioGRID" id="4263425">
    <property type="interactions" value="12"/>
</dbReference>
<dbReference type="BioGRID" id="850833">
    <property type="interactions" value="1"/>
</dbReference>
<dbReference type="FunCoup" id="P76201">
    <property type="interactions" value="731"/>
</dbReference>
<dbReference type="IntAct" id="P76201">
    <property type="interactions" value="1"/>
</dbReference>
<dbReference type="STRING" id="511145.b1697"/>
<dbReference type="jPOST" id="P76201"/>
<dbReference type="PaxDb" id="511145-b1697"/>
<dbReference type="EnsemblBacteria" id="AAC74767">
    <property type="protein sequence ID" value="AAC74767"/>
    <property type="gene ID" value="b1697"/>
</dbReference>
<dbReference type="GeneID" id="946482"/>
<dbReference type="KEGG" id="ecj:JW5276"/>
<dbReference type="KEGG" id="eco:b1697"/>
<dbReference type="KEGG" id="ecoc:C3026_09720"/>
<dbReference type="PATRIC" id="fig|1411691.4.peg.560"/>
<dbReference type="EchoBASE" id="EB3733"/>
<dbReference type="eggNOG" id="COG2086">
    <property type="taxonomic scope" value="Bacteria"/>
</dbReference>
<dbReference type="HOGENOM" id="CLU_060196_2_2_6"/>
<dbReference type="InParanoid" id="P76201"/>
<dbReference type="OMA" id="DLKIPNM"/>
<dbReference type="OrthoDB" id="9781325at2"/>
<dbReference type="PhylomeDB" id="P76201"/>
<dbReference type="BioCyc" id="EcoCyc:G6920-MONOMER"/>
<dbReference type="PRO" id="PR:P76201"/>
<dbReference type="Proteomes" id="UP000000625">
    <property type="component" value="Chromosome"/>
</dbReference>
<dbReference type="GO" id="GO:0009055">
    <property type="term" value="F:electron transfer activity"/>
    <property type="evidence" value="ECO:0000318"/>
    <property type="project" value="GO_Central"/>
</dbReference>
<dbReference type="GO" id="GO:0006974">
    <property type="term" value="P:DNA damage response"/>
    <property type="evidence" value="ECO:0000270"/>
    <property type="project" value="EcoliWiki"/>
</dbReference>
<dbReference type="CDD" id="cd01714">
    <property type="entry name" value="ETF_beta"/>
    <property type="match status" value="1"/>
</dbReference>
<dbReference type="FunFam" id="3.40.50.620:FF:000072">
    <property type="entry name" value="Protein FixA homolog"/>
    <property type="match status" value="1"/>
</dbReference>
<dbReference type="Gene3D" id="3.40.50.620">
    <property type="entry name" value="HUPs"/>
    <property type="match status" value="1"/>
</dbReference>
<dbReference type="InterPro" id="IPR000049">
    <property type="entry name" value="ET-Flavoprotein_bsu_CS"/>
</dbReference>
<dbReference type="InterPro" id="IPR014730">
    <property type="entry name" value="ETF_a/b_N"/>
</dbReference>
<dbReference type="InterPro" id="IPR012255">
    <property type="entry name" value="ETF_b"/>
</dbReference>
<dbReference type="InterPro" id="IPR033948">
    <property type="entry name" value="ETF_beta_N"/>
</dbReference>
<dbReference type="InterPro" id="IPR014729">
    <property type="entry name" value="Rossmann-like_a/b/a_fold"/>
</dbReference>
<dbReference type="NCBIfam" id="NF002888">
    <property type="entry name" value="PRK03359.1"/>
    <property type="match status" value="1"/>
</dbReference>
<dbReference type="NCBIfam" id="NF008998">
    <property type="entry name" value="PRK12342.1"/>
    <property type="match status" value="1"/>
</dbReference>
<dbReference type="PANTHER" id="PTHR21294">
    <property type="entry name" value="ELECTRON TRANSFER FLAVOPROTEIN BETA-SUBUNIT"/>
    <property type="match status" value="1"/>
</dbReference>
<dbReference type="PANTHER" id="PTHR21294:SF21">
    <property type="entry name" value="ELECTRON TRANSFER FLAVOPROTEIN SUBUNIT YDIQ-RELATED"/>
    <property type="match status" value="1"/>
</dbReference>
<dbReference type="Pfam" id="PF01012">
    <property type="entry name" value="ETF"/>
    <property type="match status" value="1"/>
</dbReference>
<dbReference type="PIRSF" id="PIRSF000090">
    <property type="entry name" value="Beta-ETF"/>
    <property type="match status" value="1"/>
</dbReference>
<dbReference type="SMART" id="SM00893">
    <property type="entry name" value="ETF"/>
    <property type="match status" value="1"/>
</dbReference>
<dbReference type="SUPFAM" id="SSF52402">
    <property type="entry name" value="Adenine nucleotide alpha hydrolases-like"/>
    <property type="match status" value="1"/>
</dbReference>
<dbReference type="PROSITE" id="PS01065">
    <property type="entry name" value="ETF_BETA"/>
    <property type="match status" value="1"/>
</dbReference>
<reference key="1">
    <citation type="journal article" date="1996" name="DNA Res.">
        <title>A 570-kb DNA sequence of the Escherichia coli K-12 genome corresponding to the 28.0-40.1 min region on the linkage map.</title>
        <authorList>
            <person name="Aiba H."/>
            <person name="Baba T."/>
            <person name="Fujita K."/>
            <person name="Hayashi K."/>
            <person name="Inada T."/>
            <person name="Isono K."/>
            <person name="Itoh T."/>
            <person name="Kasai H."/>
            <person name="Kashimoto K."/>
            <person name="Kimura S."/>
            <person name="Kitakawa M."/>
            <person name="Kitagawa M."/>
            <person name="Makino K."/>
            <person name="Miki T."/>
            <person name="Mizobuchi K."/>
            <person name="Mori H."/>
            <person name="Mori T."/>
            <person name="Motomura K."/>
            <person name="Nakade S."/>
            <person name="Nakamura Y."/>
            <person name="Nashimoto H."/>
            <person name="Nishio Y."/>
            <person name="Oshima T."/>
            <person name="Saito N."/>
            <person name="Sampei G."/>
            <person name="Seki Y."/>
            <person name="Sivasundaram S."/>
            <person name="Tagami H."/>
            <person name="Takeda J."/>
            <person name="Takemoto K."/>
            <person name="Takeuchi Y."/>
            <person name="Wada C."/>
            <person name="Yamamoto Y."/>
            <person name="Horiuchi T."/>
        </authorList>
    </citation>
    <scope>NUCLEOTIDE SEQUENCE [LARGE SCALE GENOMIC DNA]</scope>
    <source>
        <strain>K12 / W3110 / ATCC 27325 / DSM 5911</strain>
    </source>
</reference>
<reference key="2">
    <citation type="journal article" date="1997" name="Science">
        <title>The complete genome sequence of Escherichia coli K-12.</title>
        <authorList>
            <person name="Blattner F.R."/>
            <person name="Plunkett G. III"/>
            <person name="Bloch C.A."/>
            <person name="Perna N.T."/>
            <person name="Burland V."/>
            <person name="Riley M."/>
            <person name="Collado-Vides J."/>
            <person name="Glasner J.D."/>
            <person name="Rode C.K."/>
            <person name="Mayhew G.F."/>
            <person name="Gregor J."/>
            <person name="Davis N.W."/>
            <person name="Kirkpatrick H.A."/>
            <person name="Goeden M.A."/>
            <person name="Rose D.J."/>
            <person name="Mau B."/>
            <person name="Shao Y."/>
        </authorList>
    </citation>
    <scope>NUCLEOTIDE SEQUENCE [LARGE SCALE GENOMIC DNA]</scope>
    <source>
        <strain>K12 / MG1655 / ATCC 47076</strain>
    </source>
</reference>
<reference key="3">
    <citation type="journal article" date="2006" name="Mol. Syst. Biol.">
        <title>Highly accurate genome sequences of Escherichia coli K-12 strains MG1655 and W3110.</title>
        <authorList>
            <person name="Hayashi K."/>
            <person name="Morooka N."/>
            <person name="Yamamoto Y."/>
            <person name="Fujita K."/>
            <person name="Isono K."/>
            <person name="Choi S."/>
            <person name="Ohtsubo E."/>
            <person name="Baba T."/>
            <person name="Wanner B.L."/>
            <person name="Mori H."/>
            <person name="Horiuchi T."/>
        </authorList>
    </citation>
    <scope>NUCLEOTIDE SEQUENCE [LARGE SCALE GENOMIC DNA]</scope>
    <source>
        <strain>K12 / W3110 / ATCC 27325 / DSM 5911</strain>
    </source>
</reference>
<evidence type="ECO:0000305" key="1"/>
<gene>
    <name type="primary">ydiQ</name>
    <name type="ordered locus">b1697</name>
    <name type="ordered locus">JW5276</name>
</gene>
<accession>P76201</accession>
<accession>P76901</accession>
<sequence length="254" mass="27470">MKIITCFKLVPEEQDIVVTPEYTLNFDNADAKISQFDLNAIEAASQLATDDDEIAALTVGGSLLQNSKVRKDVLSRGPHSLYLVQDAQLEHALPLDTAKALAAAIEKIGFDLLIFGEGSGDLYAQQVGLLVGEILQLPVINAVSAIQRQGNTLVIERTLEDDVEVIELSVPAVLCVTSDINVPRIPSMKAILGAGKKPVNQWQASDIDWSQSAPLAELVGIRVPPQTERKHIIIDNDSPEAIAELAEHLKKALN</sequence>
<organism>
    <name type="scientific">Escherichia coli (strain K12)</name>
    <dbReference type="NCBI Taxonomy" id="83333"/>
    <lineage>
        <taxon>Bacteria</taxon>
        <taxon>Pseudomonadati</taxon>
        <taxon>Pseudomonadota</taxon>
        <taxon>Gammaproteobacteria</taxon>
        <taxon>Enterobacterales</taxon>
        <taxon>Enterobacteriaceae</taxon>
        <taxon>Escherichia</taxon>
    </lineage>
</organism>
<comment type="function">
    <text>May play a role in a redox process.</text>
</comment>
<comment type="subunit">
    <text evidence="1">YdiR and YdiQ form a heterodimer.</text>
</comment>
<comment type="similarity">
    <text evidence="1">Belongs to the ETF beta-subunit/FixA family.</text>
</comment>